<protein>
    <recommendedName>
        <fullName>Transcription factor Sox-1b</fullName>
    </recommendedName>
</protein>
<keyword id="KW-0010">Activator</keyword>
<keyword id="KW-0217">Developmental protein</keyword>
<keyword id="KW-0238">DNA-binding</keyword>
<keyword id="KW-0539">Nucleus</keyword>
<keyword id="KW-1185">Reference proteome</keyword>
<keyword id="KW-0804">Transcription</keyword>
<keyword id="KW-0805">Transcription regulation</keyword>
<evidence type="ECO:0000250" key="1">
    <source>
        <dbReference type="UniProtKB" id="P41225"/>
    </source>
</evidence>
<evidence type="ECO:0000255" key="2">
    <source>
        <dbReference type="PROSITE-ProRule" id="PRU00267"/>
    </source>
</evidence>
<evidence type="ECO:0000256" key="3">
    <source>
        <dbReference type="SAM" id="MobiDB-lite"/>
    </source>
</evidence>
<evidence type="ECO:0000269" key="4">
    <source>
    </source>
</evidence>
<evidence type="ECO:0000305" key="5"/>
<evidence type="ECO:0000312" key="6">
    <source>
        <dbReference type="EMBL" id="BAE48582.1"/>
    </source>
</evidence>
<name>SOX1B_DANRE</name>
<proteinExistence type="evidence at transcript level"/>
<gene>
    <name evidence="6" type="primary">sox1b</name>
    <name type="ORF">si:ch211-138g9.1</name>
</gene>
<sequence length="340" mass="36438">MYSMMMETDLHSPGAQTNTNTGHTGPNSGSKVNQDRVKRPMNAFMVWSRGQRRKMAQENPKMHNSEISKRLGAEWKLMSEAEKRPFIDEAKRLRAMHMKEHPDYKYRPRRKTKTLLKKDKYSLAGGLLAGSGGGGGVGLGMGAAGVGQRLESPVGHGGSTAASYAHMNGWTNGAYSGQVAAAAAAAAMMQEAQLAYGQHPGSGAHHHHGHHHHPHNPQPMHRYEMTALQYSPLSNSQSYMSASPSGYGGISYTQHQNSSVASSGAIGALGSLVKSEPSVSPPVNAHSRAPCSGDLREMISMYLPTAEAGDPSVQSRLHAVPQHYQSSTTSVNGTVPLTHI</sequence>
<accession>Q2Z1R2</accession>
<accession>A8WFX7</accession>
<reference evidence="5 6" key="1">
    <citation type="journal article" date="2006" name="Dev. Dyn.">
        <title>Comparative genomic and expression analysis of group B1 sox genes in zebrafish indicates their diversification during vertebrate evolution.</title>
        <authorList>
            <person name="Okuda Y."/>
            <person name="Yoda H."/>
            <person name="Uchikawa M."/>
            <person name="Furutani-Seiki M."/>
            <person name="Takeda H."/>
            <person name="Kondoh H."/>
            <person name="Kamachi Y."/>
        </authorList>
    </citation>
    <scope>NUCLEOTIDE SEQUENCE [MRNA]</scope>
    <scope>FUNCTION</scope>
    <scope>TISSUE SPECIFICITY</scope>
    <scope>DEVELOPMENTAL STAGE</scope>
    <source>
        <tissue evidence="4">Embryo</tissue>
    </source>
</reference>
<reference key="2">
    <citation type="journal article" date="2013" name="Nature">
        <title>The zebrafish reference genome sequence and its relationship to the human genome.</title>
        <authorList>
            <person name="Howe K."/>
            <person name="Clark M.D."/>
            <person name="Torroja C.F."/>
            <person name="Torrance J."/>
            <person name="Berthelot C."/>
            <person name="Muffato M."/>
            <person name="Collins J.E."/>
            <person name="Humphray S."/>
            <person name="McLaren K."/>
            <person name="Matthews L."/>
            <person name="McLaren S."/>
            <person name="Sealy I."/>
            <person name="Caccamo M."/>
            <person name="Churcher C."/>
            <person name="Scott C."/>
            <person name="Barrett J.C."/>
            <person name="Koch R."/>
            <person name="Rauch G.J."/>
            <person name="White S."/>
            <person name="Chow W."/>
            <person name="Kilian B."/>
            <person name="Quintais L.T."/>
            <person name="Guerra-Assuncao J.A."/>
            <person name="Zhou Y."/>
            <person name="Gu Y."/>
            <person name="Yen J."/>
            <person name="Vogel J.H."/>
            <person name="Eyre T."/>
            <person name="Redmond S."/>
            <person name="Banerjee R."/>
            <person name="Chi J."/>
            <person name="Fu B."/>
            <person name="Langley E."/>
            <person name="Maguire S.F."/>
            <person name="Laird G.K."/>
            <person name="Lloyd D."/>
            <person name="Kenyon E."/>
            <person name="Donaldson S."/>
            <person name="Sehra H."/>
            <person name="Almeida-King J."/>
            <person name="Loveland J."/>
            <person name="Trevanion S."/>
            <person name="Jones M."/>
            <person name="Quail M."/>
            <person name="Willey D."/>
            <person name="Hunt A."/>
            <person name="Burton J."/>
            <person name="Sims S."/>
            <person name="McLay K."/>
            <person name="Plumb B."/>
            <person name="Davis J."/>
            <person name="Clee C."/>
            <person name="Oliver K."/>
            <person name="Clark R."/>
            <person name="Riddle C."/>
            <person name="Elliot D."/>
            <person name="Threadgold G."/>
            <person name="Harden G."/>
            <person name="Ware D."/>
            <person name="Begum S."/>
            <person name="Mortimore B."/>
            <person name="Kerry G."/>
            <person name="Heath P."/>
            <person name="Phillimore B."/>
            <person name="Tracey A."/>
            <person name="Corby N."/>
            <person name="Dunn M."/>
            <person name="Johnson C."/>
            <person name="Wood J."/>
            <person name="Clark S."/>
            <person name="Pelan S."/>
            <person name="Griffiths G."/>
            <person name="Smith M."/>
            <person name="Glithero R."/>
            <person name="Howden P."/>
            <person name="Barker N."/>
            <person name="Lloyd C."/>
            <person name="Stevens C."/>
            <person name="Harley J."/>
            <person name="Holt K."/>
            <person name="Panagiotidis G."/>
            <person name="Lovell J."/>
            <person name="Beasley H."/>
            <person name="Henderson C."/>
            <person name="Gordon D."/>
            <person name="Auger K."/>
            <person name="Wright D."/>
            <person name="Collins J."/>
            <person name="Raisen C."/>
            <person name="Dyer L."/>
            <person name="Leung K."/>
            <person name="Robertson L."/>
            <person name="Ambridge K."/>
            <person name="Leongamornlert D."/>
            <person name="McGuire S."/>
            <person name="Gilderthorp R."/>
            <person name="Griffiths C."/>
            <person name="Manthravadi D."/>
            <person name="Nichol S."/>
            <person name="Barker G."/>
            <person name="Whitehead S."/>
            <person name="Kay M."/>
            <person name="Brown J."/>
            <person name="Murnane C."/>
            <person name="Gray E."/>
            <person name="Humphries M."/>
            <person name="Sycamore N."/>
            <person name="Barker D."/>
            <person name="Saunders D."/>
            <person name="Wallis J."/>
            <person name="Babbage A."/>
            <person name="Hammond S."/>
            <person name="Mashreghi-Mohammadi M."/>
            <person name="Barr L."/>
            <person name="Martin S."/>
            <person name="Wray P."/>
            <person name="Ellington A."/>
            <person name="Matthews N."/>
            <person name="Ellwood M."/>
            <person name="Woodmansey R."/>
            <person name="Clark G."/>
            <person name="Cooper J."/>
            <person name="Tromans A."/>
            <person name="Grafham D."/>
            <person name="Skuce C."/>
            <person name="Pandian R."/>
            <person name="Andrews R."/>
            <person name="Harrison E."/>
            <person name="Kimberley A."/>
            <person name="Garnett J."/>
            <person name="Fosker N."/>
            <person name="Hall R."/>
            <person name="Garner P."/>
            <person name="Kelly D."/>
            <person name="Bird C."/>
            <person name="Palmer S."/>
            <person name="Gehring I."/>
            <person name="Berger A."/>
            <person name="Dooley C.M."/>
            <person name="Ersan-Urun Z."/>
            <person name="Eser C."/>
            <person name="Geiger H."/>
            <person name="Geisler M."/>
            <person name="Karotki L."/>
            <person name="Kirn A."/>
            <person name="Konantz J."/>
            <person name="Konantz M."/>
            <person name="Oberlander M."/>
            <person name="Rudolph-Geiger S."/>
            <person name="Teucke M."/>
            <person name="Lanz C."/>
            <person name="Raddatz G."/>
            <person name="Osoegawa K."/>
            <person name="Zhu B."/>
            <person name="Rapp A."/>
            <person name="Widaa S."/>
            <person name="Langford C."/>
            <person name="Yang F."/>
            <person name="Schuster S.C."/>
            <person name="Carter N.P."/>
            <person name="Harrow J."/>
            <person name="Ning Z."/>
            <person name="Herrero J."/>
            <person name="Searle S.M."/>
            <person name="Enright A."/>
            <person name="Geisler R."/>
            <person name="Plasterk R.H."/>
            <person name="Lee C."/>
            <person name="Westerfield M."/>
            <person name="de Jong P.J."/>
            <person name="Zon L.I."/>
            <person name="Postlethwait J.H."/>
            <person name="Nusslein-Volhard C."/>
            <person name="Hubbard T.J."/>
            <person name="Roest Crollius H."/>
            <person name="Rogers J."/>
            <person name="Stemple D.L."/>
        </authorList>
    </citation>
    <scope>NUCLEOTIDE SEQUENCE [LARGE SCALE GENOMIC DNA]</scope>
    <source>
        <strain>Tuebingen</strain>
    </source>
</reference>
<reference key="3">
    <citation type="submission" date="2007-11" db="EMBL/GenBank/DDBJ databases">
        <authorList>
            <consortium name="NIH - Zebrafish Gene Collection (ZGC) project"/>
        </authorList>
    </citation>
    <scope>NUCLEOTIDE SEQUENCE [LARGE SCALE MRNA]</scope>
</reference>
<comment type="function">
    <text evidence="4">Transcriptional activator.</text>
</comment>
<comment type="subcellular location">
    <subcellularLocation>
        <location evidence="2">Nucleus</location>
    </subcellularLocation>
</comment>
<comment type="tissue specificity">
    <text evidence="4">At the 3-somite stage, expressed in the forebrain. At the 12-somite stage, strongly expressed in the forebrain and weakly expressed throughout the central nervous system. At the 25-somite stage, also expressed in the lens.</text>
</comment>
<comment type="developmental stage">
    <text evidence="4">Expressed zygotically. First detected at the tail bud stage and continues to be expressed for at least the first 48 hours of development.</text>
</comment>
<comment type="domain">
    <text evidence="1">The 9aaTAD motif is a transactivation domain present in a large number of yeast and animal transcription factors.</text>
</comment>
<feature type="chain" id="PRO_0000238910" description="Transcription factor Sox-1b">
    <location>
        <begin position="1"/>
        <end position="340"/>
    </location>
</feature>
<feature type="DNA-binding region" description="HMG box" evidence="2">
    <location>
        <begin position="37"/>
        <end position="105"/>
    </location>
</feature>
<feature type="region of interest" description="Disordered" evidence="3">
    <location>
        <begin position="1"/>
        <end position="35"/>
    </location>
</feature>
<feature type="region of interest" description="Disordered" evidence="3">
    <location>
        <begin position="198"/>
        <end position="219"/>
    </location>
</feature>
<feature type="short sequence motif" description="9aaTAD" evidence="1">
    <location>
        <begin position="297"/>
        <end position="305"/>
    </location>
</feature>
<feature type="compositionally biased region" description="Polar residues" evidence="3">
    <location>
        <begin position="14"/>
        <end position="32"/>
    </location>
</feature>
<feature type="compositionally biased region" description="Basic residues" evidence="3">
    <location>
        <begin position="204"/>
        <end position="215"/>
    </location>
</feature>
<organism>
    <name type="scientific">Danio rerio</name>
    <name type="common">Zebrafish</name>
    <name type="synonym">Brachydanio rerio</name>
    <dbReference type="NCBI Taxonomy" id="7955"/>
    <lineage>
        <taxon>Eukaryota</taxon>
        <taxon>Metazoa</taxon>
        <taxon>Chordata</taxon>
        <taxon>Craniata</taxon>
        <taxon>Vertebrata</taxon>
        <taxon>Euteleostomi</taxon>
        <taxon>Actinopterygii</taxon>
        <taxon>Neopterygii</taxon>
        <taxon>Teleostei</taxon>
        <taxon>Ostariophysi</taxon>
        <taxon>Cypriniformes</taxon>
        <taxon>Danionidae</taxon>
        <taxon>Danioninae</taxon>
        <taxon>Danio</taxon>
    </lineage>
</organism>
<dbReference type="EMBL" id="AB242328">
    <property type="protein sequence ID" value="BAE48582.1"/>
    <property type="molecule type" value="mRNA"/>
</dbReference>
<dbReference type="EMBL" id="AL929216">
    <property type="protein sequence ID" value="CAX13546.1"/>
    <property type="molecule type" value="Genomic_DNA"/>
</dbReference>
<dbReference type="EMBL" id="BC154495">
    <property type="protein sequence ID" value="AAI54496.1"/>
    <property type="molecule type" value="mRNA"/>
</dbReference>
<dbReference type="RefSeq" id="NP_001032751.1">
    <property type="nucleotide sequence ID" value="NM_001037662.1"/>
</dbReference>
<dbReference type="SMR" id="Q2Z1R2"/>
<dbReference type="FunCoup" id="Q2Z1R2">
    <property type="interactions" value="9"/>
</dbReference>
<dbReference type="STRING" id="7955.ENSDARP00000026510"/>
<dbReference type="PaxDb" id="7955-ENSDARP00000026510"/>
<dbReference type="Ensembl" id="ENSDART00000010894">
    <property type="protein sequence ID" value="ENSDARP00000026510"/>
    <property type="gene ID" value="ENSDARG00000008131"/>
</dbReference>
<dbReference type="GeneID" id="562710"/>
<dbReference type="KEGG" id="dre:562710"/>
<dbReference type="AGR" id="ZFIN:ZDB-GENE-060322-5"/>
<dbReference type="CTD" id="562710"/>
<dbReference type="ZFIN" id="ZDB-GENE-060322-5">
    <property type="gene designation" value="sox1b"/>
</dbReference>
<dbReference type="eggNOG" id="KOG0527">
    <property type="taxonomic scope" value="Eukaryota"/>
</dbReference>
<dbReference type="HOGENOM" id="CLU_021123_0_0_1"/>
<dbReference type="InParanoid" id="Q2Z1R2"/>
<dbReference type="OMA" id="HAVPQHY"/>
<dbReference type="OrthoDB" id="6247875at2759"/>
<dbReference type="PhylomeDB" id="Q2Z1R2"/>
<dbReference type="TreeFam" id="TF351735"/>
<dbReference type="Reactome" id="R-DRE-3769402">
    <property type="pathway name" value="Deactivation of the beta-catenin transactivating complex"/>
</dbReference>
<dbReference type="PRO" id="PR:Q2Z1R2"/>
<dbReference type="Proteomes" id="UP000000437">
    <property type="component" value="Chromosome 1"/>
</dbReference>
<dbReference type="Bgee" id="ENSDARG00000008131">
    <property type="expression patterns" value="Expressed in interneuron and 16 other cell types or tissues"/>
</dbReference>
<dbReference type="GO" id="GO:0005634">
    <property type="term" value="C:nucleus"/>
    <property type="evidence" value="ECO:0000318"/>
    <property type="project" value="GO_Central"/>
</dbReference>
<dbReference type="GO" id="GO:0005667">
    <property type="term" value="C:transcription regulator complex"/>
    <property type="evidence" value="ECO:0000305"/>
    <property type="project" value="ZFIN"/>
</dbReference>
<dbReference type="GO" id="GO:0001228">
    <property type="term" value="F:DNA-binding transcription activator activity, RNA polymerase II-specific"/>
    <property type="evidence" value="ECO:0000318"/>
    <property type="project" value="GO_Central"/>
</dbReference>
<dbReference type="GO" id="GO:0000978">
    <property type="term" value="F:RNA polymerase II cis-regulatory region sequence-specific DNA binding"/>
    <property type="evidence" value="ECO:0000318"/>
    <property type="project" value="GO_Central"/>
</dbReference>
<dbReference type="GO" id="GO:0007420">
    <property type="term" value="P:brain development"/>
    <property type="evidence" value="ECO:0000318"/>
    <property type="project" value="GO_Central"/>
</dbReference>
<dbReference type="GO" id="GO:0000122">
    <property type="term" value="P:negative regulation of transcription by RNA polymerase II"/>
    <property type="evidence" value="ECO:0000318"/>
    <property type="project" value="GO_Central"/>
</dbReference>
<dbReference type="GO" id="GO:0030182">
    <property type="term" value="P:neuron differentiation"/>
    <property type="evidence" value="ECO:0000318"/>
    <property type="project" value="GO_Central"/>
</dbReference>
<dbReference type="GO" id="GO:0045944">
    <property type="term" value="P:positive regulation of transcription by RNA polymerase II"/>
    <property type="evidence" value="ECO:0000318"/>
    <property type="project" value="GO_Central"/>
</dbReference>
<dbReference type="CDD" id="cd01388">
    <property type="entry name" value="HMG-box_SoxB"/>
    <property type="match status" value="1"/>
</dbReference>
<dbReference type="FunFam" id="1.10.30.10:FF:000002">
    <property type="entry name" value="transcription factor Sox-2"/>
    <property type="match status" value="1"/>
</dbReference>
<dbReference type="Gene3D" id="1.10.30.10">
    <property type="entry name" value="High mobility group box domain"/>
    <property type="match status" value="1"/>
</dbReference>
<dbReference type="InterPro" id="IPR009071">
    <property type="entry name" value="HMG_box_dom"/>
</dbReference>
<dbReference type="InterPro" id="IPR036910">
    <property type="entry name" value="HMG_box_dom_sf"/>
</dbReference>
<dbReference type="InterPro" id="IPR022097">
    <property type="entry name" value="SOX_fam"/>
</dbReference>
<dbReference type="InterPro" id="IPR050140">
    <property type="entry name" value="SRY-related_HMG-box_TF-like"/>
</dbReference>
<dbReference type="PANTHER" id="PTHR10270">
    <property type="entry name" value="SOX TRANSCRIPTION FACTOR"/>
    <property type="match status" value="1"/>
</dbReference>
<dbReference type="PANTHER" id="PTHR10270:SF328">
    <property type="entry name" value="TRANSCRIPTION FACTOR SOX-1"/>
    <property type="match status" value="1"/>
</dbReference>
<dbReference type="Pfam" id="PF00505">
    <property type="entry name" value="HMG_box"/>
    <property type="match status" value="1"/>
</dbReference>
<dbReference type="Pfam" id="PF12336">
    <property type="entry name" value="SOXp"/>
    <property type="match status" value="1"/>
</dbReference>
<dbReference type="SMART" id="SM00398">
    <property type="entry name" value="HMG"/>
    <property type="match status" value="1"/>
</dbReference>
<dbReference type="SUPFAM" id="SSF47095">
    <property type="entry name" value="HMG-box"/>
    <property type="match status" value="1"/>
</dbReference>
<dbReference type="PROSITE" id="PS50118">
    <property type="entry name" value="HMG_BOX_2"/>
    <property type="match status" value="1"/>
</dbReference>